<sequence length="102" mass="10602">MEHVNEILATVGVILQQTQTTQDVNASAKLGAYIGAGVTMIAGSTVGIGQGYIFGKAVEAIARNPEVEKQVFKLIFIGSAVSESTAIYGLLISFILIFVAGA</sequence>
<dbReference type="EMBL" id="L43967">
    <property type="protein sequence ID" value="AAC71632.1"/>
    <property type="molecule type" value="Genomic_DNA"/>
</dbReference>
<dbReference type="PIR" id="G64244">
    <property type="entry name" value="G64244"/>
</dbReference>
<dbReference type="RefSeq" id="WP_009885619.1">
    <property type="nucleotide sequence ID" value="NC_000908.2"/>
</dbReference>
<dbReference type="SMR" id="P47644"/>
<dbReference type="FunCoup" id="P47644">
    <property type="interactions" value="154"/>
</dbReference>
<dbReference type="STRING" id="243273.MG_404"/>
<dbReference type="GeneID" id="88282590"/>
<dbReference type="KEGG" id="mge:MG_404"/>
<dbReference type="eggNOG" id="COG0636">
    <property type="taxonomic scope" value="Bacteria"/>
</dbReference>
<dbReference type="HOGENOM" id="CLU_148047_2_2_14"/>
<dbReference type="InParanoid" id="P47644"/>
<dbReference type="OrthoDB" id="9810379at2"/>
<dbReference type="BioCyc" id="MGEN243273:G1GJ2-501-MONOMER"/>
<dbReference type="Proteomes" id="UP000000807">
    <property type="component" value="Chromosome"/>
</dbReference>
<dbReference type="GO" id="GO:0005886">
    <property type="term" value="C:plasma membrane"/>
    <property type="evidence" value="ECO:0007669"/>
    <property type="project" value="UniProtKB-SubCell"/>
</dbReference>
<dbReference type="GO" id="GO:0045259">
    <property type="term" value="C:proton-transporting ATP synthase complex"/>
    <property type="evidence" value="ECO:0007669"/>
    <property type="project" value="UniProtKB-KW"/>
</dbReference>
<dbReference type="GO" id="GO:0033177">
    <property type="term" value="C:proton-transporting two-sector ATPase complex, proton-transporting domain"/>
    <property type="evidence" value="ECO:0007669"/>
    <property type="project" value="InterPro"/>
</dbReference>
<dbReference type="GO" id="GO:0008289">
    <property type="term" value="F:lipid binding"/>
    <property type="evidence" value="ECO:0007669"/>
    <property type="project" value="UniProtKB-KW"/>
</dbReference>
<dbReference type="GO" id="GO:0046933">
    <property type="term" value="F:proton-transporting ATP synthase activity, rotational mechanism"/>
    <property type="evidence" value="ECO:0007669"/>
    <property type="project" value="UniProtKB-UniRule"/>
</dbReference>
<dbReference type="GO" id="GO:0015986">
    <property type="term" value="P:proton motive force-driven ATP synthesis"/>
    <property type="evidence" value="ECO:0000318"/>
    <property type="project" value="GO_Central"/>
</dbReference>
<dbReference type="CDD" id="cd18184">
    <property type="entry name" value="ATP-synt_Fo_c_NaATPase"/>
    <property type="match status" value="1"/>
</dbReference>
<dbReference type="FunFam" id="1.20.20.10:FF:000004">
    <property type="entry name" value="ATP synthase subunit c"/>
    <property type="match status" value="1"/>
</dbReference>
<dbReference type="Gene3D" id="1.20.20.10">
    <property type="entry name" value="F1F0 ATP synthase subunit C"/>
    <property type="match status" value="1"/>
</dbReference>
<dbReference type="HAMAP" id="MF_01396">
    <property type="entry name" value="ATP_synth_c_bact"/>
    <property type="match status" value="1"/>
</dbReference>
<dbReference type="InterPro" id="IPR005953">
    <property type="entry name" value="ATP_synth_csu_bac/chlpt"/>
</dbReference>
<dbReference type="InterPro" id="IPR000454">
    <property type="entry name" value="ATP_synth_F0_csu"/>
</dbReference>
<dbReference type="InterPro" id="IPR020537">
    <property type="entry name" value="ATP_synth_F0_csu_DDCD_BS"/>
</dbReference>
<dbReference type="InterPro" id="IPR038662">
    <property type="entry name" value="ATP_synth_F0_csu_sf"/>
</dbReference>
<dbReference type="InterPro" id="IPR002379">
    <property type="entry name" value="ATPase_proteolipid_c-like_dom"/>
</dbReference>
<dbReference type="InterPro" id="IPR035921">
    <property type="entry name" value="F/V-ATP_Csub_sf"/>
</dbReference>
<dbReference type="NCBIfam" id="TIGR01260">
    <property type="entry name" value="ATP_synt_c"/>
    <property type="match status" value="1"/>
</dbReference>
<dbReference type="NCBIfam" id="NF005521">
    <property type="entry name" value="PRK07159.1"/>
    <property type="match status" value="1"/>
</dbReference>
<dbReference type="PANTHER" id="PTHR10031">
    <property type="entry name" value="ATP SYNTHASE LIPID-BINDING PROTEIN, MITOCHONDRIAL"/>
    <property type="match status" value="1"/>
</dbReference>
<dbReference type="PANTHER" id="PTHR10031:SF0">
    <property type="entry name" value="ATPASE PROTEIN 9"/>
    <property type="match status" value="1"/>
</dbReference>
<dbReference type="Pfam" id="PF00137">
    <property type="entry name" value="ATP-synt_C"/>
    <property type="match status" value="1"/>
</dbReference>
<dbReference type="PRINTS" id="PR00124">
    <property type="entry name" value="ATPASEC"/>
</dbReference>
<dbReference type="SUPFAM" id="SSF81333">
    <property type="entry name" value="F1F0 ATP synthase subunit C"/>
    <property type="match status" value="1"/>
</dbReference>
<dbReference type="PROSITE" id="PS00605">
    <property type="entry name" value="ATPASE_C"/>
    <property type="match status" value="1"/>
</dbReference>
<protein>
    <recommendedName>
        <fullName evidence="2">ATP synthase subunit c</fullName>
    </recommendedName>
    <alternativeName>
        <fullName evidence="2">ATP synthase F(0) sector subunit c</fullName>
    </alternativeName>
    <alternativeName>
        <fullName evidence="2">F-type ATPase subunit c</fullName>
        <shortName evidence="2">F-ATPase subunit c</shortName>
    </alternativeName>
    <alternativeName>
        <fullName evidence="2">Lipid-binding protein</fullName>
    </alternativeName>
</protein>
<comment type="function">
    <text evidence="2">F(1)F(0) ATP synthase produces ATP from ADP in the presence of a proton or sodium gradient. F-type ATPases consist of two structural domains, F(1) containing the extramembraneous catalytic core and F(0) containing the membrane proton channel, linked together by a central stalk and a peripheral stalk. During catalysis, ATP synthesis in the catalytic domain of F(1) is coupled via a rotary mechanism of the central stalk subunits to proton translocation.</text>
</comment>
<comment type="function">
    <text evidence="2">Key component of the F(0) channel; it plays a direct role in translocation across the membrane. A homomeric c-ring of between 10-14 subunits forms the central stalk rotor element with the F(1) delta and epsilon subunits.</text>
</comment>
<comment type="subunit">
    <text evidence="2">F-type ATPases have 2 components, F(1) - the catalytic core - and F(0) - the membrane proton channel. F(1) has five subunits: alpha(3), beta(3), gamma(1), delta(1), epsilon(1). F(0) has three main subunits: a(1), b(2) and c(10-14). The alpha and beta chains form an alternating ring which encloses part of the gamma chain. F(1) is attached to F(0) by a central stalk formed by the gamma and epsilon chains, while a peripheral stalk is formed by the delta and b chains.</text>
</comment>
<comment type="subcellular location">
    <subcellularLocation>
        <location evidence="2">Cell membrane</location>
        <topology evidence="2">Multi-pass membrane protein</topology>
    </subcellularLocation>
</comment>
<comment type="miscellaneous">
    <text evidence="1">Dicyclohexylcarbodiimide (DCDD) binding to the active glutamate residue inhibits ATPase in vitro.</text>
</comment>
<comment type="similarity">
    <text evidence="2">Belongs to the ATPase C chain family.</text>
</comment>
<proteinExistence type="inferred from homology"/>
<reference key="1">
    <citation type="journal article" date="1995" name="Science">
        <title>The minimal gene complement of Mycoplasma genitalium.</title>
        <authorList>
            <person name="Fraser C.M."/>
            <person name="Gocayne J.D."/>
            <person name="White O."/>
            <person name="Adams M.D."/>
            <person name="Clayton R.A."/>
            <person name="Fleischmann R.D."/>
            <person name="Bult C.J."/>
            <person name="Kerlavage A.R."/>
            <person name="Sutton G.G."/>
            <person name="Kelley J.M."/>
            <person name="Fritchman J.L."/>
            <person name="Weidman J.F."/>
            <person name="Small K.V."/>
            <person name="Sandusky M."/>
            <person name="Fuhrmann J.L."/>
            <person name="Nguyen D.T."/>
            <person name="Utterback T.R."/>
            <person name="Saudek D.M."/>
            <person name="Phillips C.A."/>
            <person name="Merrick J.M."/>
            <person name="Tomb J.-F."/>
            <person name="Dougherty B.A."/>
            <person name="Bott K.F."/>
            <person name="Hu P.-C."/>
            <person name="Lucier T.S."/>
            <person name="Peterson S.N."/>
            <person name="Smith H.O."/>
            <person name="Hutchison C.A. III"/>
            <person name="Venter J.C."/>
        </authorList>
    </citation>
    <scope>NUCLEOTIDE SEQUENCE [LARGE SCALE GENOMIC DNA]</scope>
    <source>
        <strain>ATCC 33530 / DSM 19775 / NCTC 10195 / G37</strain>
    </source>
</reference>
<keyword id="KW-0066">ATP synthesis</keyword>
<keyword id="KW-1003">Cell membrane</keyword>
<keyword id="KW-0138">CF(0)</keyword>
<keyword id="KW-0375">Hydrogen ion transport</keyword>
<keyword id="KW-0406">Ion transport</keyword>
<keyword id="KW-0446">Lipid-binding</keyword>
<keyword id="KW-0472">Membrane</keyword>
<keyword id="KW-1185">Reference proteome</keyword>
<keyword id="KW-0812">Transmembrane</keyword>
<keyword id="KW-1133">Transmembrane helix</keyword>
<keyword id="KW-0813">Transport</keyword>
<organism>
    <name type="scientific">Mycoplasma genitalium (strain ATCC 33530 / DSM 19775 / NCTC 10195 / G37)</name>
    <name type="common">Mycoplasmoides genitalium</name>
    <dbReference type="NCBI Taxonomy" id="243273"/>
    <lineage>
        <taxon>Bacteria</taxon>
        <taxon>Bacillati</taxon>
        <taxon>Mycoplasmatota</taxon>
        <taxon>Mycoplasmoidales</taxon>
        <taxon>Mycoplasmoidaceae</taxon>
        <taxon>Mycoplasmoides</taxon>
    </lineage>
</organism>
<evidence type="ECO:0000250" key="1"/>
<evidence type="ECO:0000255" key="2">
    <source>
        <dbReference type="HAMAP-Rule" id="MF_01396"/>
    </source>
</evidence>
<name>ATPL_MYCGE</name>
<feature type="chain" id="PRO_0000112152" description="ATP synthase subunit c">
    <location>
        <begin position="1"/>
        <end position="102"/>
    </location>
</feature>
<feature type="transmembrane region" description="Helical" evidence="2">
    <location>
        <begin position="34"/>
        <end position="54"/>
    </location>
</feature>
<feature type="transmembrane region" description="Helical" evidence="2">
    <location>
        <begin position="80"/>
        <end position="100"/>
    </location>
</feature>
<feature type="site" description="Reversibly protonated during proton transport" evidence="2">
    <location>
        <position position="83"/>
    </location>
</feature>
<accession>P47644</accession>
<gene>
    <name evidence="2" type="primary">atpE</name>
    <name type="ordered locus">MG404</name>
</gene>